<feature type="chain" id="PRO_1000213403" description="Ribosome rescue factor SmrB">
    <location>
        <begin position="1"/>
        <end position="174"/>
    </location>
</feature>
<feature type="domain" description="Smr" evidence="1">
    <location>
        <begin position="96"/>
        <end position="171"/>
    </location>
</feature>
<organism>
    <name type="scientific">Tolumonas auensis (strain DSM 9187 / NBRC 110442 / TA 4)</name>
    <dbReference type="NCBI Taxonomy" id="595494"/>
    <lineage>
        <taxon>Bacteria</taxon>
        <taxon>Pseudomonadati</taxon>
        <taxon>Pseudomonadota</taxon>
        <taxon>Gammaproteobacteria</taxon>
        <taxon>Aeromonadales</taxon>
        <taxon>Aeromonadaceae</taxon>
        <taxon>Tolumonas</taxon>
    </lineage>
</organism>
<name>SMRB_TOLAT</name>
<accession>C4L8D4</accession>
<sequence length="174" mass="19932">MSKKNTLDDQDVSLFREAIAGARPIKQDTIRLHSPAIKQKAQIREIRETQQALHYFSDEYEPLLNQDGPVKYCRADVSTYEVKKLRRGDYIPDMMLDLHGLTQQQAKSELAALIEACRRQHIRCACVMHGHGKNILKQRIPLWLAQHPDVMAFHQAPKLWGGDAAILVLIEQNI</sequence>
<gene>
    <name evidence="1" type="primary">smrB</name>
    <name type="ordered locus">Tola_2181</name>
</gene>
<keyword id="KW-0255">Endonuclease</keyword>
<keyword id="KW-0378">Hydrolase</keyword>
<keyword id="KW-0540">Nuclease</keyword>
<keyword id="KW-1185">Reference proteome</keyword>
<keyword id="KW-0694">RNA-binding</keyword>
<keyword id="KW-0699">rRNA-binding</keyword>
<dbReference type="EC" id="3.1.-.-" evidence="1"/>
<dbReference type="EMBL" id="CP001616">
    <property type="protein sequence ID" value="ACQ93780.1"/>
    <property type="molecule type" value="Genomic_DNA"/>
</dbReference>
<dbReference type="RefSeq" id="WP_015879248.1">
    <property type="nucleotide sequence ID" value="NC_012691.1"/>
</dbReference>
<dbReference type="SMR" id="C4L8D4"/>
<dbReference type="STRING" id="595494.Tola_2181"/>
<dbReference type="KEGG" id="tau:Tola_2181"/>
<dbReference type="eggNOG" id="COG2840">
    <property type="taxonomic scope" value="Bacteria"/>
</dbReference>
<dbReference type="HOGENOM" id="CLU_055978_4_0_6"/>
<dbReference type="OrthoDB" id="5795446at2"/>
<dbReference type="Proteomes" id="UP000009073">
    <property type="component" value="Chromosome"/>
</dbReference>
<dbReference type="GO" id="GO:0004521">
    <property type="term" value="F:RNA endonuclease activity"/>
    <property type="evidence" value="ECO:0007669"/>
    <property type="project" value="UniProtKB-UniRule"/>
</dbReference>
<dbReference type="GO" id="GO:0019843">
    <property type="term" value="F:rRNA binding"/>
    <property type="evidence" value="ECO:0007669"/>
    <property type="project" value="UniProtKB-UniRule"/>
</dbReference>
<dbReference type="GO" id="GO:0072344">
    <property type="term" value="P:rescue of stalled ribosome"/>
    <property type="evidence" value="ECO:0007669"/>
    <property type="project" value="UniProtKB-UniRule"/>
</dbReference>
<dbReference type="Gene3D" id="3.30.1370.110">
    <property type="match status" value="1"/>
</dbReference>
<dbReference type="HAMAP" id="MF_01042">
    <property type="entry name" value="SmrB"/>
    <property type="match status" value="1"/>
</dbReference>
<dbReference type="InterPro" id="IPR002625">
    <property type="entry name" value="Smr_dom"/>
</dbReference>
<dbReference type="InterPro" id="IPR036063">
    <property type="entry name" value="Smr_dom_sf"/>
</dbReference>
<dbReference type="InterPro" id="IPR022990">
    <property type="entry name" value="SmrB-like"/>
</dbReference>
<dbReference type="NCBIfam" id="NF003432">
    <property type="entry name" value="PRK04946.1"/>
    <property type="match status" value="1"/>
</dbReference>
<dbReference type="PANTHER" id="PTHR35562">
    <property type="entry name" value="DNA ENDONUCLEASE SMRA-RELATED"/>
    <property type="match status" value="1"/>
</dbReference>
<dbReference type="PANTHER" id="PTHR35562:SF1">
    <property type="entry name" value="UPF0115 PROTEIN YFCN"/>
    <property type="match status" value="1"/>
</dbReference>
<dbReference type="Pfam" id="PF01713">
    <property type="entry name" value="Smr"/>
    <property type="match status" value="1"/>
</dbReference>
<dbReference type="SMART" id="SM00463">
    <property type="entry name" value="SMR"/>
    <property type="match status" value="1"/>
</dbReference>
<dbReference type="SUPFAM" id="SSF160443">
    <property type="entry name" value="SMR domain-like"/>
    <property type="match status" value="1"/>
</dbReference>
<dbReference type="PROSITE" id="PS50828">
    <property type="entry name" value="SMR"/>
    <property type="match status" value="1"/>
</dbReference>
<protein>
    <recommendedName>
        <fullName evidence="1">Ribosome rescue factor SmrB</fullName>
        <ecNumber evidence="1">3.1.-.-</ecNumber>
    </recommendedName>
</protein>
<evidence type="ECO:0000255" key="1">
    <source>
        <dbReference type="HAMAP-Rule" id="MF_01042"/>
    </source>
</evidence>
<proteinExistence type="inferred from homology"/>
<reference key="1">
    <citation type="submission" date="2009-05" db="EMBL/GenBank/DDBJ databases">
        <title>Complete sequence of Tolumonas auensis DSM 9187.</title>
        <authorList>
            <consortium name="US DOE Joint Genome Institute"/>
            <person name="Lucas S."/>
            <person name="Copeland A."/>
            <person name="Lapidus A."/>
            <person name="Glavina del Rio T."/>
            <person name="Tice H."/>
            <person name="Bruce D."/>
            <person name="Goodwin L."/>
            <person name="Pitluck S."/>
            <person name="Chertkov O."/>
            <person name="Brettin T."/>
            <person name="Detter J.C."/>
            <person name="Han C."/>
            <person name="Larimer F."/>
            <person name="Land M."/>
            <person name="Hauser L."/>
            <person name="Kyrpides N."/>
            <person name="Mikhailova N."/>
            <person name="Spring S."/>
            <person name="Beller H."/>
        </authorList>
    </citation>
    <scope>NUCLEOTIDE SEQUENCE [LARGE SCALE GENOMIC DNA]</scope>
    <source>
        <strain>DSM 9187 / NBRC 110442 / TA 4</strain>
    </source>
</reference>
<comment type="function">
    <text evidence="1">Acts as a ribosome collision sensor. Detects stalled/collided disomes (pairs of ribosomes where the leading ribosome is stalled and a second ribosome has collided with it) and endonucleolytically cleaves mRNA at the 5' boundary of the stalled ribosome. Stalled/collided disomes form a new interface (primarily via the 30S subunits) that binds SmrB. Cleaved mRNA becomes available for tmRNA ligation, leading to ribosomal subunit dissociation and rescue of stalled ribosomes.</text>
</comment>
<comment type="subunit">
    <text evidence="1">Associates with collided ribosomes, but not with correctly translating polysomes.</text>
</comment>
<comment type="similarity">
    <text evidence="1">Belongs to the SmrB family.</text>
</comment>